<organism>
    <name type="scientific">Caldicellulosiruptor bescii (strain ATCC BAA-1888 / DSM 6725 / KCTC 15123 / Z-1320)</name>
    <name type="common">Anaerocellum thermophilum</name>
    <dbReference type="NCBI Taxonomy" id="521460"/>
    <lineage>
        <taxon>Bacteria</taxon>
        <taxon>Bacillati</taxon>
        <taxon>Bacillota</taxon>
        <taxon>Bacillota incertae sedis</taxon>
        <taxon>Caldicellulosiruptorales</taxon>
        <taxon>Caldicellulosiruptoraceae</taxon>
        <taxon>Caldicellulosiruptor</taxon>
    </lineage>
</organism>
<proteinExistence type="inferred from homology"/>
<sequence length="449" mass="49196">MGKLFGTDGVRGVANKELTCELAFDLGRAGAYVLTEMHKKPKILIGKDTRISCDMLEAALCAGLTSVGADVYLAGVVTTPAIAYLVKSHGFDAGIMISASHNPYEFNGIKFFNSQGFKLSDQIEEKIEDIILNKKWDEVPHAQFDAIGRVNRVDLKKDYQEYLKSTLNGASFKGLKIVIDCANGAAYKIAPEVFEELGAEVVVINNQPDGTNINKECGSTHLKMLQQEVVKNRADFGIAYDGDADRTLFVDEEGNIVDGDKIMLLLAQNLKQQGRLSRNTLIVTVMSNMGLFVAAKELGIELEVTKVGDRYVLEKMLEGGYSIGGEQSGHIILLDFATTGDGILTSLQLTKLIRESGKKLSDLAKIMKVYPQVLVNAKVENGKKDLYSKDPVILEAIKKVEEKLNGKGRVLIRPSGTEPLIRVMIEGEDYEEIKKDAEALASLIESRLS</sequence>
<gene>
    <name evidence="1" type="primary">glmM</name>
    <name type="ordered locus">Athe_2324</name>
</gene>
<dbReference type="EC" id="5.4.2.10" evidence="1"/>
<dbReference type="EMBL" id="CP001393">
    <property type="protein sequence ID" value="ACM61394.1"/>
    <property type="molecule type" value="Genomic_DNA"/>
</dbReference>
<dbReference type="RefSeq" id="WP_015908649.1">
    <property type="nucleotide sequence ID" value="NC_012034.1"/>
</dbReference>
<dbReference type="SMR" id="B9MMU5"/>
<dbReference type="STRING" id="521460.Athe_2324"/>
<dbReference type="GeneID" id="31773675"/>
<dbReference type="KEGG" id="ate:Athe_2324"/>
<dbReference type="eggNOG" id="COG1109">
    <property type="taxonomic scope" value="Bacteria"/>
</dbReference>
<dbReference type="HOGENOM" id="CLU_016950_7_0_9"/>
<dbReference type="Proteomes" id="UP000007723">
    <property type="component" value="Chromosome"/>
</dbReference>
<dbReference type="GO" id="GO:0005829">
    <property type="term" value="C:cytosol"/>
    <property type="evidence" value="ECO:0007669"/>
    <property type="project" value="TreeGrafter"/>
</dbReference>
<dbReference type="GO" id="GO:0000287">
    <property type="term" value="F:magnesium ion binding"/>
    <property type="evidence" value="ECO:0007669"/>
    <property type="project" value="UniProtKB-UniRule"/>
</dbReference>
<dbReference type="GO" id="GO:0008966">
    <property type="term" value="F:phosphoglucosamine mutase activity"/>
    <property type="evidence" value="ECO:0007669"/>
    <property type="project" value="UniProtKB-UniRule"/>
</dbReference>
<dbReference type="GO" id="GO:0004615">
    <property type="term" value="F:phosphomannomutase activity"/>
    <property type="evidence" value="ECO:0007669"/>
    <property type="project" value="TreeGrafter"/>
</dbReference>
<dbReference type="GO" id="GO:0005975">
    <property type="term" value="P:carbohydrate metabolic process"/>
    <property type="evidence" value="ECO:0007669"/>
    <property type="project" value="InterPro"/>
</dbReference>
<dbReference type="GO" id="GO:0009252">
    <property type="term" value="P:peptidoglycan biosynthetic process"/>
    <property type="evidence" value="ECO:0007669"/>
    <property type="project" value="TreeGrafter"/>
</dbReference>
<dbReference type="GO" id="GO:0006048">
    <property type="term" value="P:UDP-N-acetylglucosamine biosynthetic process"/>
    <property type="evidence" value="ECO:0007669"/>
    <property type="project" value="TreeGrafter"/>
</dbReference>
<dbReference type="CDD" id="cd05802">
    <property type="entry name" value="GlmM"/>
    <property type="match status" value="1"/>
</dbReference>
<dbReference type="FunFam" id="3.30.310.50:FF:000001">
    <property type="entry name" value="Phosphoglucosamine mutase"/>
    <property type="match status" value="1"/>
</dbReference>
<dbReference type="FunFam" id="3.40.120.10:FF:000001">
    <property type="entry name" value="Phosphoglucosamine mutase"/>
    <property type="match status" value="1"/>
</dbReference>
<dbReference type="FunFam" id="3.40.120.10:FF:000003">
    <property type="entry name" value="Phosphoglucosamine mutase"/>
    <property type="match status" value="1"/>
</dbReference>
<dbReference type="Gene3D" id="3.40.120.10">
    <property type="entry name" value="Alpha-D-Glucose-1,6-Bisphosphate, subunit A, domain 3"/>
    <property type="match status" value="3"/>
</dbReference>
<dbReference type="Gene3D" id="3.30.310.50">
    <property type="entry name" value="Alpha-D-phosphohexomutase, C-terminal domain"/>
    <property type="match status" value="1"/>
</dbReference>
<dbReference type="HAMAP" id="MF_01554_B">
    <property type="entry name" value="GlmM_B"/>
    <property type="match status" value="1"/>
</dbReference>
<dbReference type="InterPro" id="IPR005844">
    <property type="entry name" value="A-D-PHexomutase_a/b/a-I"/>
</dbReference>
<dbReference type="InterPro" id="IPR016055">
    <property type="entry name" value="A-D-PHexomutase_a/b/a-I/II/III"/>
</dbReference>
<dbReference type="InterPro" id="IPR005845">
    <property type="entry name" value="A-D-PHexomutase_a/b/a-II"/>
</dbReference>
<dbReference type="InterPro" id="IPR005846">
    <property type="entry name" value="A-D-PHexomutase_a/b/a-III"/>
</dbReference>
<dbReference type="InterPro" id="IPR005843">
    <property type="entry name" value="A-D-PHexomutase_C"/>
</dbReference>
<dbReference type="InterPro" id="IPR036900">
    <property type="entry name" value="A-D-PHexomutase_C_sf"/>
</dbReference>
<dbReference type="InterPro" id="IPR016066">
    <property type="entry name" value="A-D-PHexomutase_CS"/>
</dbReference>
<dbReference type="InterPro" id="IPR005841">
    <property type="entry name" value="Alpha-D-phosphohexomutase_SF"/>
</dbReference>
<dbReference type="InterPro" id="IPR006352">
    <property type="entry name" value="GlmM_bact"/>
</dbReference>
<dbReference type="InterPro" id="IPR050060">
    <property type="entry name" value="Phosphoglucosamine_mutase"/>
</dbReference>
<dbReference type="NCBIfam" id="TIGR01455">
    <property type="entry name" value="glmM"/>
    <property type="match status" value="1"/>
</dbReference>
<dbReference type="NCBIfam" id="NF008139">
    <property type="entry name" value="PRK10887.1"/>
    <property type="match status" value="1"/>
</dbReference>
<dbReference type="PANTHER" id="PTHR42946:SF1">
    <property type="entry name" value="PHOSPHOGLUCOMUTASE (ALPHA-D-GLUCOSE-1,6-BISPHOSPHATE-DEPENDENT)"/>
    <property type="match status" value="1"/>
</dbReference>
<dbReference type="PANTHER" id="PTHR42946">
    <property type="entry name" value="PHOSPHOHEXOSE MUTASE"/>
    <property type="match status" value="1"/>
</dbReference>
<dbReference type="Pfam" id="PF02878">
    <property type="entry name" value="PGM_PMM_I"/>
    <property type="match status" value="1"/>
</dbReference>
<dbReference type="Pfam" id="PF02879">
    <property type="entry name" value="PGM_PMM_II"/>
    <property type="match status" value="1"/>
</dbReference>
<dbReference type="Pfam" id="PF02880">
    <property type="entry name" value="PGM_PMM_III"/>
    <property type="match status" value="1"/>
</dbReference>
<dbReference type="Pfam" id="PF00408">
    <property type="entry name" value="PGM_PMM_IV"/>
    <property type="match status" value="1"/>
</dbReference>
<dbReference type="PRINTS" id="PR00509">
    <property type="entry name" value="PGMPMM"/>
</dbReference>
<dbReference type="SUPFAM" id="SSF55957">
    <property type="entry name" value="Phosphoglucomutase, C-terminal domain"/>
    <property type="match status" value="1"/>
</dbReference>
<dbReference type="SUPFAM" id="SSF53738">
    <property type="entry name" value="Phosphoglucomutase, first 3 domains"/>
    <property type="match status" value="3"/>
</dbReference>
<dbReference type="PROSITE" id="PS00710">
    <property type="entry name" value="PGM_PMM"/>
    <property type="match status" value="1"/>
</dbReference>
<reference key="1">
    <citation type="submission" date="2009-01" db="EMBL/GenBank/DDBJ databases">
        <title>Complete sequence of chromosome of Caldicellulosiruptor becscii DSM 6725.</title>
        <authorList>
            <person name="Lucas S."/>
            <person name="Copeland A."/>
            <person name="Lapidus A."/>
            <person name="Glavina del Rio T."/>
            <person name="Tice H."/>
            <person name="Bruce D."/>
            <person name="Goodwin L."/>
            <person name="Pitluck S."/>
            <person name="Sims D."/>
            <person name="Meincke L."/>
            <person name="Brettin T."/>
            <person name="Detter J.C."/>
            <person name="Han C."/>
            <person name="Larimer F."/>
            <person name="Land M."/>
            <person name="Hauser L."/>
            <person name="Kyrpides N."/>
            <person name="Ovchinnikova G."/>
            <person name="Kataeva I."/>
            <person name="Adams M.W.W."/>
        </authorList>
    </citation>
    <scope>NUCLEOTIDE SEQUENCE [LARGE SCALE GENOMIC DNA]</scope>
    <source>
        <strain>ATCC BAA-1888 / DSM 6725 / KCTC 15123 / Z-1320</strain>
    </source>
</reference>
<name>GLMM_CALBD</name>
<feature type="chain" id="PRO_1000185346" description="Phosphoglucosamine mutase">
    <location>
        <begin position="1"/>
        <end position="449"/>
    </location>
</feature>
<feature type="active site" description="Phosphoserine intermediate" evidence="1">
    <location>
        <position position="100"/>
    </location>
</feature>
<feature type="binding site" description="via phosphate group" evidence="1">
    <location>
        <position position="100"/>
    </location>
    <ligand>
        <name>Mg(2+)</name>
        <dbReference type="ChEBI" id="CHEBI:18420"/>
    </ligand>
</feature>
<feature type="binding site" evidence="1">
    <location>
        <position position="241"/>
    </location>
    <ligand>
        <name>Mg(2+)</name>
        <dbReference type="ChEBI" id="CHEBI:18420"/>
    </ligand>
</feature>
<feature type="binding site" evidence="1">
    <location>
        <position position="243"/>
    </location>
    <ligand>
        <name>Mg(2+)</name>
        <dbReference type="ChEBI" id="CHEBI:18420"/>
    </ligand>
</feature>
<feature type="binding site" evidence="1">
    <location>
        <position position="245"/>
    </location>
    <ligand>
        <name>Mg(2+)</name>
        <dbReference type="ChEBI" id="CHEBI:18420"/>
    </ligand>
</feature>
<feature type="modified residue" description="Phosphoserine" evidence="1">
    <location>
        <position position="100"/>
    </location>
</feature>
<accession>B9MMU5</accession>
<comment type="function">
    <text evidence="1">Catalyzes the conversion of glucosamine-6-phosphate to glucosamine-1-phosphate.</text>
</comment>
<comment type="catalytic activity">
    <reaction evidence="1">
        <text>alpha-D-glucosamine 1-phosphate = D-glucosamine 6-phosphate</text>
        <dbReference type="Rhea" id="RHEA:23424"/>
        <dbReference type="ChEBI" id="CHEBI:58516"/>
        <dbReference type="ChEBI" id="CHEBI:58725"/>
        <dbReference type="EC" id="5.4.2.10"/>
    </reaction>
</comment>
<comment type="cofactor">
    <cofactor evidence="1">
        <name>Mg(2+)</name>
        <dbReference type="ChEBI" id="CHEBI:18420"/>
    </cofactor>
    <text evidence="1">Binds 1 Mg(2+) ion per subunit.</text>
</comment>
<comment type="PTM">
    <text evidence="1">Activated by phosphorylation.</text>
</comment>
<comment type="similarity">
    <text evidence="1">Belongs to the phosphohexose mutase family.</text>
</comment>
<evidence type="ECO:0000255" key="1">
    <source>
        <dbReference type="HAMAP-Rule" id="MF_01554"/>
    </source>
</evidence>
<protein>
    <recommendedName>
        <fullName evidence="1">Phosphoglucosamine mutase</fullName>
        <ecNumber evidence="1">5.4.2.10</ecNumber>
    </recommendedName>
</protein>
<keyword id="KW-0413">Isomerase</keyword>
<keyword id="KW-0460">Magnesium</keyword>
<keyword id="KW-0479">Metal-binding</keyword>
<keyword id="KW-0597">Phosphoprotein</keyword>